<evidence type="ECO:0000250" key="1"/>
<evidence type="ECO:0000250" key="2">
    <source>
        <dbReference type="UniProtKB" id="Q6ZN04"/>
    </source>
</evidence>
<evidence type="ECO:0000255" key="3">
    <source>
        <dbReference type="PROSITE-ProRule" id="PRU00117"/>
    </source>
</evidence>
<evidence type="ECO:0000255" key="4">
    <source>
        <dbReference type="PROSITE-ProRule" id="PRU00175"/>
    </source>
</evidence>
<evidence type="ECO:0000256" key="5">
    <source>
        <dbReference type="SAM" id="MobiDB-lite"/>
    </source>
</evidence>
<evidence type="ECO:0000305" key="6"/>
<protein>
    <recommendedName>
        <fullName>RNA-binding protein MEX3B</fullName>
    </recommendedName>
    <alternativeName>
        <fullName>RING finger and KH domain-containing protein 3</fullName>
    </alternativeName>
</protein>
<dbReference type="EMBL" id="AK173330">
    <property type="protein sequence ID" value="BAD32608.1"/>
    <property type="status" value="ALT_INIT"/>
    <property type="molecule type" value="Transcribed_RNA"/>
</dbReference>
<dbReference type="EMBL" id="BC031512">
    <property type="protein sequence ID" value="AAH31512.1"/>
    <property type="molecule type" value="mRNA"/>
</dbReference>
<dbReference type="EMBL" id="BC067199">
    <property type="protein sequence ID" value="AAH67199.1"/>
    <property type="molecule type" value="mRNA"/>
</dbReference>
<dbReference type="EMBL" id="BC108401">
    <property type="protein sequence ID" value="AAI08402.1"/>
    <property type="molecule type" value="mRNA"/>
</dbReference>
<dbReference type="SMR" id="Q69Z36"/>
<dbReference type="FunCoup" id="Q69Z36">
    <property type="interactions" value="1459"/>
</dbReference>
<dbReference type="STRING" id="10090.ENSMUSP00000082168"/>
<dbReference type="GlyGen" id="Q69Z36">
    <property type="glycosylation" value="5 sites, 1 N-linked glycan (1 site)"/>
</dbReference>
<dbReference type="iPTMnet" id="Q69Z36"/>
<dbReference type="PhosphoSitePlus" id="Q69Z36"/>
<dbReference type="PaxDb" id="10090-ENSMUSP00000082168"/>
<dbReference type="ProteomicsDB" id="295554"/>
<dbReference type="AGR" id="MGI:1918252"/>
<dbReference type="MGI" id="MGI:1918252">
    <property type="gene designation" value="Mex3b"/>
</dbReference>
<dbReference type="eggNOG" id="KOG2113">
    <property type="taxonomic scope" value="Eukaryota"/>
</dbReference>
<dbReference type="InParanoid" id="Q69Z36"/>
<dbReference type="PhylomeDB" id="Q69Z36"/>
<dbReference type="ChiTaRS" id="Mex3b">
    <property type="organism name" value="mouse"/>
</dbReference>
<dbReference type="PRO" id="PR:Q69Z36"/>
<dbReference type="Proteomes" id="UP000000589">
    <property type="component" value="Unplaced"/>
</dbReference>
<dbReference type="RNAct" id="Q69Z36">
    <property type="molecule type" value="protein"/>
</dbReference>
<dbReference type="GO" id="GO:0005634">
    <property type="term" value="C:nucleus"/>
    <property type="evidence" value="ECO:0007669"/>
    <property type="project" value="UniProtKB-SubCell"/>
</dbReference>
<dbReference type="GO" id="GO:0000932">
    <property type="term" value="C:P-body"/>
    <property type="evidence" value="ECO:0007669"/>
    <property type="project" value="UniProtKB-SubCell"/>
</dbReference>
<dbReference type="GO" id="GO:0032794">
    <property type="term" value="F:GTPase activating protein binding"/>
    <property type="evidence" value="ECO:0000353"/>
    <property type="project" value="MGI"/>
</dbReference>
<dbReference type="GO" id="GO:0003723">
    <property type="term" value="F:RNA binding"/>
    <property type="evidence" value="ECO:0007669"/>
    <property type="project" value="UniProtKB-KW"/>
</dbReference>
<dbReference type="GO" id="GO:0008270">
    <property type="term" value="F:zinc ion binding"/>
    <property type="evidence" value="ECO:0007669"/>
    <property type="project" value="UniProtKB-KW"/>
</dbReference>
<dbReference type="GO" id="GO:0098609">
    <property type="term" value="P:cell-cell adhesion"/>
    <property type="evidence" value="ECO:0000315"/>
    <property type="project" value="MGI"/>
</dbReference>
<dbReference type="GO" id="GO:0051649">
    <property type="term" value="P:establishment of localization in cell"/>
    <property type="evidence" value="ECO:0000315"/>
    <property type="project" value="MGI"/>
</dbReference>
<dbReference type="GO" id="GO:0006909">
    <property type="term" value="P:phagocytosis"/>
    <property type="evidence" value="ECO:0000315"/>
    <property type="project" value="MGI"/>
</dbReference>
<dbReference type="GO" id="GO:0022409">
    <property type="term" value="P:positive regulation of cell-cell adhesion"/>
    <property type="evidence" value="ECO:0000315"/>
    <property type="project" value="MGI"/>
</dbReference>
<dbReference type="GO" id="GO:0050766">
    <property type="term" value="P:positive regulation of phagocytosis"/>
    <property type="evidence" value="ECO:0000315"/>
    <property type="project" value="MGI"/>
</dbReference>
<dbReference type="GO" id="GO:0072697">
    <property type="term" value="P:protein localization to cell cortex"/>
    <property type="evidence" value="ECO:0000315"/>
    <property type="project" value="MGI"/>
</dbReference>
<dbReference type="CDD" id="cd22423">
    <property type="entry name" value="KH-I_MEX3_rpt1"/>
    <property type="match status" value="1"/>
</dbReference>
<dbReference type="CDD" id="cd22424">
    <property type="entry name" value="KH-I_MEX3_rpt2"/>
    <property type="match status" value="1"/>
</dbReference>
<dbReference type="CDD" id="cd16721">
    <property type="entry name" value="RING-HC_MEX3B"/>
    <property type="match status" value="1"/>
</dbReference>
<dbReference type="FunFam" id="3.30.1370.10:FF:000013">
    <property type="entry name" value="Mex-3 RNA-binding family member B"/>
    <property type="match status" value="1"/>
</dbReference>
<dbReference type="FunFam" id="3.30.40.10:FF:000090">
    <property type="entry name" value="Mex-3 RNA-binding family member C"/>
    <property type="match status" value="1"/>
</dbReference>
<dbReference type="FunFam" id="3.30.1370.10:FF:000012">
    <property type="entry name" value="Mex-3 RNA-binding family member D"/>
    <property type="match status" value="1"/>
</dbReference>
<dbReference type="Gene3D" id="3.30.1370.10">
    <property type="entry name" value="K Homology domain, type 1"/>
    <property type="match status" value="2"/>
</dbReference>
<dbReference type="Gene3D" id="3.30.40.10">
    <property type="entry name" value="Zinc/RING finger domain, C3HC4 (zinc finger)"/>
    <property type="match status" value="1"/>
</dbReference>
<dbReference type="InterPro" id="IPR047228">
    <property type="entry name" value="KH-I_MEX3_rpt1"/>
</dbReference>
<dbReference type="InterPro" id="IPR047226">
    <property type="entry name" value="KH-I_MEX3_rpt2"/>
</dbReference>
<dbReference type="InterPro" id="IPR004087">
    <property type="entry name" value="KH_dom"/>
</dbReference>
<dbReference type="InterPro" id="IPR004088">
    <property type="entry name" value="KH_dom_type_1"/>
</dbReference>
<dbReference type="InterPro" id="IPR036612">
    <property type="entry name" value="KH_dom_type_1_sf"/>
</dbReference>
<dbReference type="InterPro" id="IPR047227">
    <property type="entry name" value="MEX3"/>
</dbReference>
<dbReference type="InterPro" id="IPR001841">
    <property type="entry name" value="Znf_RING"/>
</dbReference>
<dbReference type="InterPro" id="IPR013083">
    <property type="entry name" value="Znf_RING/FYVE/PHD"/>
</dbReference>
<dbReference type="PANTHER" id="PTHR23285">
    <property type="entry name" value="RING FINGER AND KH DOMAIN CONTAINING PROTEIN 1"/>
    <property type="match status" value="1"/>
</dbReference>
<dbReference type="PANTHER" id="PTHR23285:SF5">
    <property type="entry name" value="RNA-BINDING PROTEIN MEX3B"/>
    <property type="match status" value="1"/>
</dbReference>
<dbReference type="Pfam" id="PF00013">
    <property type="entry name" value="KH_1"/>
    <property type="match status" value="1"/>
</dbReference>
<dbReference type="Pfam" id="PF13920">
    <property type="entry name" value="zf-C3HC4_3"/>
    <property type="match status" value="1"/>
</dbReference>
<dbReference type="SMART" id="SM00322">
    <property type="entry name" value="KH"/>
    <property type="match status" value="2"/>
</dbReference>
<dbReference type="SMART" id="SM00184">
    <property type="entry name" value="RING"/>
    <property type="match status" value="1"/>
</dbReference>
<dbReference type="SUPFAM" id="SSF54791">
    <property type="entry name" value="Eukaryotic type KH-domain (KH-domain type I)"/>
    <property type="match status" value="2"/>
</dbReference>
<dbReference type="SUPFAM" id="SSF57850">
    <property type="entry name" value="RING/U-box"/>
    <property type="match status" value="1"/>
</dbReference>
<dbReference type="PROSITE" id="PS50084">
    <property type="entry name" value="KH_TYPE_1"/>
    <property type="match status" value="1"/>
</dbReference>
<dbReference type="PROSITE" id="PS50089">
    <property type="entry name" value="ZF_RING_2"/>
    <property type="match status" value="1"/>
</dbReference>
<organism>
    <name type="scientific">Mus musculus</name>
    <name type="common">Mouse</name>
    <dbReference type="NCBI Taxonomy" id="10090"/>
    <lineage>
        <taxon>Eukaryota</taxon>
        <taxon>Metazoa</taxon>
        <taxon>Chordata</taxon>
        <taxon>Craniata</taxon>
        <taxon>Vertebrata</taxon>
        <taxon>Euteleostomi</taxon>
        <taxon>Mammalia</taxon>
        <taxon>Eutheria</taxon>
        <taxon>Euarchontoglires</taxon>
        <taxon>Glires</taxon>
        <taxon>Rodentia</taxon>
        <taxon>Myomorpha</taxon>
        <taxon>Muroidea</taxon>
        <taxon>Muridae</taxon>
        <taxon>Murinae</taxon>
        <taxon>Mus</taxon>
        <taxon>Mus</taxon>
    </lineage>
</organism>
<name>MEX3B_MOUSE</name>
<gene>
    <name type="primary">Mex3b</name>
    <name type="synonym">Kiaa2009</name>
    <name type="synonym">Rkhd3</name>
</gene>
<sequence length="601" mass="61781">MPSSLFADLERNGSGGGGGGGGGGGGGGSGGGETLDDQRALQLALDQLSLLGLDSDEGASLYDSEPRKKSVNMTECVPVPSSEHVAEIVGRQGGSGRDGDRRGFSISPTPSLEPWLPGCKIKALRAKTNTYIKTPVRGEEPVFVVTGRKEDVAMARREIISAAEHFSMIRASRNKNTALNGAVPGPPNLPGQTTIQVRVPYRVVGLVVGPKGATIKRIQQQTHTYIVTPSRDKEPVFEVTGMPENVDRAREEIEAHIALRTGGIIELTDENDFHANGTDVGFDLHHGSGGSGPGSLWSKPTPSITPTPGRKPFSSYRNDSSSSLGSASTDSYFGGGTSGSAAATSRLADYSPPSPALSFAHNGNNNNNGNGYTYTAGEASVPSPDGGPELQPTFDPAPAPPPGTPLLWAQFERSPGGGSAAPVSSSCSSSASSSASSSSVVFPGGGASSTPSNANLGLLVHRRLHPGTSCPRLSPPLHMATGAGEHHLARRVRSDPGGGGLAYAAYANGLGTQLPGLPSSDTSGSSSSSSSSSSSSSSSSGLRRKGSRDCSVCFESEVIAALVPCGHNLFCMECANRICEKSEPECPVCHTAVTQAIRIFS</sequence>
<reference key="1">
    <citation type="journal article" date="2004" name="DNA Res.">
        <title>Prediction of the coding sequences of mouse homologues of KIAA gene: IV. The complete nucleotide sequences of 500 mouse KIAA-homologous cDNAs identified by screening of terminal sequences of cDNA clones randomly sampled from size-fractionated libraries.</title>
        <authorList>
            <person name="Okazaki N."/>
            <person name="Kikuno R."/>
            <person name="Ohara R."/>
            <person name="Inamoto S."/>
            <person name="Koseki H."/>
            <person name="Hiraoka S."/>
            <person name="Saga Y."/>
            <person name="Seino S."/>
            <person name="Nishimura M."/>
            <person name="Kaisho T."/>
            <person name="Hoshino K."/>
            <person name="Kitamura H."/>
            <person name="Nagase T."/>
            <person name="Ohara O."/>
            <person name="Koga H."/>
        </authorList>
    </citation>
    <scope>NUCLEOTIDE SEQUENCE [LARGE SCALE MRNA]</scope>
    <source>
        <tissue>Embryonic tail</tissue>
    </source>
</reference>
<reference key="2">
    <citation type="journal article" date="2004" name="Genome Res.">
        <title>The status, quality, and expansion of the NIH full-length cDNA project: the Mammalian Gene Collection (MGC).</title>
        <authorList>
            <consortium name="The MGC Project Team"/>
        </authorList>
    </citation>
    <scope>NUCLEOTIDE SEQUENCE [LARGE SCALE MRNA] OF 184-601</scope>
    <source>
        <strain>C57BL/6J</strain>
        <strain>FVB/N</strain>
        <tissue>Brain</tissue>
        <tissue>Limb</tissue>
        <tissue>Mammary gland</tissue>
    </source>
</reference>
<proteinExistence type="evidence at transcript level"/>
<comment type="function">
    <text evidence="1">RNA-binding protein. May be involved in post-transcriptional regulatory mechanisms (By similarity).</text>
</comment>
<comment type="subcellular location">
    <subcellularLocation>
        <location evidence="1">Cytoplasm</location>
    </subcellularLocation>
    <subcellularLocation>
        <location evidence="1">Nucleus</location>
    </subcellularLocation>
    <subcellularLocation>
        <location evidence="1">Cytoplasm</location>
        <location evidence="1">P-body</location>
    </subcellularLocation>
    <subcellularLocation>
        <location evidence="1">Cytoplasmic granule</location>
    </subcellularLocation>
    <text evidence="1">Predominantly expressed in the cytoplasm and shuttles between the cytoplasm and the nucleus through the CRM1 export pathway. Localization to P-bodies is dependent on 14-3-3 (By similarity).</text>
</comment>
<comment type="domain">
    <text evidence="1">Binds RNA through its KH domains.</text>
</comment>
<comment type="PTM">
    <text evidence="1">Phosphorylation at Ser-494 creates a docking site for 14-3-3, which stabilizes the protein and modulates its ability to bind RNA.</text>
</comment>
<comment type="sequence caution" evidence="6">
    <conflict type="erroneous initiation">
        <sequence resource="EMBL-CDS" id="BAD32608"/>
    </conflict>
</comment>
<keyword id="KW-0963">Cytoplasm</keyword>
<keyword id="KW-0479">Metal-binding</keyword>
<keyword id="KW-0539">Nucleus</keyword>
<keyword id="KW-0597">Phosphoprotein</keyword>
<keyword id="KW-1185">Reference proteome</keyword>
<keyword id="KW-0677">Repeat</keyword>
<keyword id="KW-0694">RNA-binding</keyword>
<keyword id="KW-0862">Zinc</keyword>
<keyword id="KW-0863">Zinc-finger</keyword>
<accession>Q69Z36</accession>
<accession>Q2VPR1</accession>
<accession>Q6NX84</accession>
<accession>Q8K2G2</accession>
<feature type="chain" id="PRO_0000278785" description="RNA-binding protein MEX3B">
    <location>
        <begin position="1"/>
        <end position="601"/>
    </location>
</feature>
<feature type="domain" description="KH 1" evidence="3">
    <location>
        <begin position="98"/>
        <end position="159"/>
    </location>
</feature>
<feature type="domain" description="KH 2" evidence="3">
    <location>
        <begin position="192"/>
        <end position="253"/>
    </location>
</feature>
<feature type="zinc finger region" description="RING-type" evidence="4">
    <location>
        <begin position="550"/>
        <end position="590"/>
    </location>
</feature>
<feature type="region of interest" description="Disordered" evidence="5">
    <location>
        <begin position="1"/>
        <end position="39"/>
    </location>
</feature>
<feature type="region of interest" description="Disordered" evidence="5">
    <location>
        <begin position="90"/>
        <end position="109"/>
    </location>
</feature>
<feature type="region of interest" description="Disordered" evidence="5">
    <location>
        <begin position="284"/>
        <end position="332"/>
    </location>
</feature>
<feature type="region of interest" description="Disordered" evidence="5">
    <location>
        <begin position="344"/>
        <end position="448"/>
    </location>
</feature>
<feature type="region of interest" description="Disordered" evidence="5">
    <location>
        <begin position="514"/>
        <end position="546"/>
    </location>
</feature>
<feature type="compositionally biased region" description="Gly residues" evidence="5">
    <location>
        <begin position="13"/>
        <end position="33"/>
    </location>
</feature>
<feature type="compositionally biased region" description="Low complexity" evidence="5">
    <location>
        <begin position="320"/>
        <end position="331"/>
    </location>
</feature>
<feature type="compositionally biased region" description="Low complexity" evidence="5">
    <location>
        <begin position="362"/>
        <end position="371"/>
    </location>
</feature>
<feature type="compositionally biased region" description="Pro residues" evidence="5">
    <location>
        <begin position="395"/>
        <end position="404"/>
    </location>
</feature>
<feature type="compositionally biased region" description="Low complexity" evidence="5">
    <location>
        <begin position="420"/>
        <end position="442"/>
    </location>
</feature>
<feature type="compositionally biased region" description="Low complexity" evidence="5">
    <location>
        <begin position="519"/>
        <end position="540"/>
    </location>
</feature>
<feature type="modified residue" description="Phosphoserine" evidence="2">
    <location>
        <position position="4"/>
    </location>
</feature>
<feature type="modified residue" description="Phosphoserine" evidence="2">
    <location>
        <position position="320"/>
    </location>
</feature>
<feature type="modified residue" description="Phosphoserine" evidence="2">
    <location>
        <position position="494"/>
    </location>
</feature>